<feature type="chain" id="PRO_0000231137" description="3-dehydroquinate synthase">
    <location>
        <begin position="1"/>
        <end position="368"/>
    </location>
</feature>
<feature type="binding site" evidence="1">
    <location>
        <begin position="109"/>
        <end position="113"/>
    </location>
    <ligand>
        <name>NAD(+)</name>
        <dbReference type="ChEBI" id="CHEBI:57540"/>
    </ligand>
</feature>
<feature type="binding site" evidence="1">
    <location>
        <begin position="133"/>
        <end position="134"/>
    </location>
    <ligand>
        <name>NAD(+)</name>
        <dbReference type="ChEBI" id="CHEBI:57540"/>
    </ligand>
</feature>
<feature type="binding site" evidence="1">
    <location>
        <position position="146"/>
    </location>
    <ligand>
        <name>NAD(+)</name>
        <dbReference type="ChEBI" id="CHEBI:57540"/>
    </ligand>
</feature>
<feature type="binding site" evidence="1">
    <location>
        <position position="155"/>
    </location>
    <ligand>
        <name>NAD(+)</name>
        <dbReference type="ChEBI" id="CHEBI:57540"/>
    </ligand>
</feature>
<feature type="binding site" evidence="1">
    <location>
        <begin position="173"/>
        <end position="176"/>
    </location>
    <ligand>
        <name>NAD(+)</name>
        <dbReference type="ChEBI" id="CHEBI:57540"/>
    </ligand>
</feature>
<feature type="binding site" evidence="1">
    <location>
        <position position="188"/>
    </location>
    <ligand>
        <name>Zn(2+)</name>
        <dbReference type="ChEBI" id="CHEBI:29105"/>
    </ligand>
</feature>
<feature type="binding site" evidence="1">
    <location>
        <position position="253"/>
    </location>
    <ligand>
        <name>Zn(2+)</name>
        <dbReference type="ChEBI" id="CHEBI:29105"/>
    </ligand>
</feature>
<feature type="binding site" evidence="1">
    <location>
        <position position="270"/>
    </location>
    <ligand>
        <name>Zn(2+)</name>
        <dbReference type="ChEBI" id="CHEBI:29105"/>
    </ligand>
</feature>
<dbReference type="EC" id="4.2.3.4" evidence="1"/>
<dbReference type="EMBL" id="AP008231">
    <property type="protein sequence ID" value="BAD79186.1"/>
    <property type="molecule type" value="Genomic_DNA"/>
</dbReference>
<dbReference type="RefSeq" id="WP_011243308.1">
    <property type="nucleotide sequence ID" value="NZ_CP085785.1"/>
</dbReference>
<dbReference type="SMR" id="Q5N3D4"/>
<dbReference type="GeneID" id="72429348"/>
<dbReference type="KEGG" id="syc:syc0996_d"/>
<dbReference type="eggNOG" id="COG0337">
    <property type="taxonomic scope" value="Bacteria"/>
</dbReference>
<dbReference type="UniPathway" id="UPA00053">
    <property type="reaction ID" value="UER00085"/>
</dbReference>
<dbReference type="Proteomes" id="UP000001175">
    <property type="component" value="Chromosome"/>
</dbReference>
<dbReference type="GO" id="GO:0005737">
    <property type="term" value="C:cytoplasm"/>
    <property type="evidence" value="ECO:0007669"/>
    <property type="project" value="UniProtKB-SubCell"/>
</dbReference>
<dbReference type="GO" id="GO:0003856">
    <property type="term" value="F:3-dehydroquinate synthase activity"/>
    <property type="evidence" value="ECO:0007669"/>
    <property type="project" value="UniProtKB-UniRule"/>
</dbReference>
<dbReference type="GO" id="GO:0046872">
    <property type="term" value="F:metal ion binding"/>
    <property type="evidence" value="ECO:0007669"/>
    <property type="project" value="UniProtKB-KW"/>
</dbReference>
<dbReference type="GO" id="GO:0000166">
    <property type="term" value="F:nucleotide binding"/>
    <property type="evidence" value="ECO:0007669"/>
    <property type="project" value="UniProtKB-KW"/>
</dbReference>
<dbReference type="GO" id="GO:0008652">
    <property type="term" value="P:amino acid biosynthetic process"/>
    <property type="evidence" value="ECO:0007669"/>
    <property type="project" value="UniProtKB-KW"/>
</dbReference>
<dbReference type="GO" id="GO:0009073">
    <property type="term" value="P:aromatic amino acid family biosynthetic process"/>
    <property type="evidence" value="ECO:0007669"/>
    <property type="project" value="UniProtKB-KW"/>
</dbReference>
<dbReference type="GO" id="GO:0009423">
    <property type="term" value="P:chorismate biosynthetic process"/>
    <property type="evidence" value="ECO:0007669"/>
    <property type="project" value="UniProtKB-UniRule"/>
</dbReference>
<dbReference type="CDD" id="cd08195">
    <property type="entry name" value="DHQS"/>
    <property type="match status" value="1"/>
</dbReference>
<dbReference type="FunFam" id="3.40.50.1970:FF:000001">
    <property type="entry name" value="3-dehydroquinate synthase"/>
    <property type="match status" value="1"/>
</dbReference>
<dbReference type="Gene3D" id="3.40.50.1970">
    <property type="match status" value="1"/>
</dbReference>
<dbReference type="Gene3D" id="1.20.1090.10">
    <property type="entry name" value="Dehydroquinate synthase-like - alpha domain"/>
    <property type="match status" value="1"/>
</dbReference>
<dbReference type="HAMAP" id="MF_00110">
    <property type="entry name" value="DHQ_synthase"/>
    <property type="match status" value="1"/>
</dbReference>
<dbReference type="InterPro" id="IPR050071">
    <property type="entry name" value="Dehydroquinate_synthase"/>
</dbReference>
<dbReference type="InterPro" id="IPR016037">
    <property type="entry name" value="DHQ_synth_AroB"/>
</dbReference>
<dbReference type="InterPro" id="IPR030963">
    <property type="entry name" value="DHQ_synth_fam"/>
</dbReference>
<dbReference type="InterPro" id="IPR030960">
    <property type="entry name" value="DHQS/DOIS_N"/>
</dbReference>
<dbReference type="InterPro" id="IPR056179">
    <property type="entry name" value="DHQS_C"/>
</dbReference>
<dbReference type="NCBIfam" id="TIGR01357">
    <property type="entry name" value="aroB"/>
    <property type="match status" value="1"/>
</dbReference>
<dbReference type="PANTHER" id="PTHR43622">
    <property type="entry name" value="3-DEHYDROQUINATE SYNTHASE"/>
    <property type="match status" value="1"/>
</dbReference>
<dbReference type="PANTHER" id="PTHR43622:SF7">
    <property type="entry name" value="3-DEHYDROQUINATE SYNTHASE, CHLOROPLASTIC"/>
    <property type="match status" value="1"/>
</dbReference>
<dbReference type="Pfam" id="PF01761">
    <property type="entry name" value="DHQ_synthase"/>
    <property type="match status" value="1"/>
</dbReference>
<dbReference type="Pfam" id="PF24621">
    <property type="entry name" value="DHQS_C"/>
    <property type="match status" value="1"/>
</dbReference>
<dbReference type="PIRSF" id="PIRSF001455">
    <property type="entry name" value="DHQ_synth"/>
    <property type="match status" value="1"/>
</dbReference>
<dbReference type="SUPFAM" id="SSF56796">
    <property type="entry name" value="Dehydroquinate synthase-like"/>
    <property type="match status" value="1"/>
</dbReference>
<proteinExistence type="inferred from homology"/>
<reference key="1">
    <citation type="journal article" date="2007" name="Photosyn. Res.">
        <title>Complete nucleotide sequence of the freshwater unicellular cyanobacterium Synechococcus elongatus PCC 6301 chromosome: gene content and organization.</title>
        <authorList>
            <person name="Sugita C."/>
            <person name="Ogata K."/>
            <person name="Shikata M."/>
            <person name="Jikuya H."/>
            <person name="Takano J."/>
            <person name="Furumichi M."/>
            <person name="Kanehisa M."/>
            <person name="Omata T."/>
            <person name="Sugiura M."/>
            <person name="Sugita M."/>
        </authorList>
    </citation>
    <scope>NUCLEOTIDE SEQUENCE [LARGE SCALE GENOMIC DNA]</scope>
    <source>
        <strain>ATCC 27144 / PCC 6301 / SAUG 1402/1</strain>
    </source>
</reference>
<name>AROB_SYNP6</name>
<keyword id="KW-0028">Amino-acid biosynthesis</keyword>
<keyword id="KW-0057">Aromatic amino acid biosynthesis</keyword>
<keyword id="KW-0170">Cobalt</keyword>
<keyword id="KW-0963">Cytoplasm</keyword>
<keyword id="KW-0456">Lyase</keyword>
<keyword id="KW-0479">Metal-binding</keyword>
<keyword id="KW-0520">NAD</keyword>
<keyword id="KW-0547">Nucleotide-binding</keyword>
<keyword id="KW-0862">Zinc</keyword>
<gene>
    <name evidence="1" type="primary">aroB</name>
    <name type="ordered locus">syc0996_d</name>
</gene>
<protein>
    <recommendedName>
        <fullName evidence="1">3-dehydroquinate synthase</fullName>
        <shortName evidence="1">DHQS</shortName>
        <ecNumber evidence="1">4.2.3.4</ecNumber>
    </recommendedName>
</protein>
<sequence>MSVQIPVALPQNAYEIAIANGGLAAAGTWLQQADLKAGTKLLIVTNPAIGRRYGDRLVAALQEAGFIVDCLTLPAGERYKTPATVQRIYDKALELRLERRSALVALGGGVIGDMTGFAAATWLRGISFVQIPTSLLAMVDASIGGKTGVNHPRGKNLIGAFHQPKLVLIDPETLQTLPVREFRAGMAEVIKYGVIWDRDLFERLEASPFLDRPRSLPANLLTLILERSCRAKAEVVAKDEKESGLRAILNYGHTIGHAVESLTGYRIVNHGEAVAIGMVAAGRLAVALGLWNQDECDRQEAVIAKAGLPTRLPEGIDQAAIVEALQLDKKVQAGKVRFILPTTLGHVTITDQVPSQTLQEVLQAIANP</sequence>
<accession>Q5N3D4</accession>
<evidence type="ECO:0000255" key="1">
    <source>
        <dbReference type="HAMAP-Rule" id="MF_00110"/>
    </source>
</evidence>
<comment type="function">
    <text evidence="1">Catalyzes the conversion of 3-deoxy-D-arabino-heptulosonate 7-phosphate (DAHP) to dehydroquinate (DHQ).</text>
</comment>
<comment type="catalytic activity">
    <reaction evidence="1">
        <text>7-phospho-2-dehydro-3-deoxy-D-arabino-heptonate = 3-dehydroquinate + phosphate</text>
        <dbReference type="Rhea" id="RHEA:21968"/>
        <dbReference type="ChEBI" id="CHEBI:32364"/>
        <dbReference type="ChEBI" id="CHEBI:43474"/>
        <dbReference type="ChEBI" id="CHEBI:58394"/>
        <dbReference type="EC" id="4.2.3.4"/>
    </reaction>
</comment>
<comment type="cofactor">
    <cofactor evidence="1">
        <name>Co(2+)</name>
        <dbReference type="ChEBI" id="CHEBI:48828"/>
    </cofactor>
    <cofactor evidence="1">
        <name>Zn(2+)</name>
        <dbReference type="ChEBI" id="CHEBI:29105"/>
    </cofactor>
    <text evidence="1">Binds 1 divalent metal cation per subunit. Can use either Co(2+) or Zn(2+).</text>
</comment>
<comment type="cofactor">
    <cofactor evidence="1">
        <name>NAD(+)</name>
        <dbReference type="ChEBI" id="CHEBI:57540"/>
    </cofactor>
</comment>
<comment type="pathway">
    <text evidence="1">Metabolic intermediate biosynthesis; chorismate biosynthesis; chorismate from D-erythrose 4-phosphate and phosphoenolpyruvate: step 2/7.</text>
</comment>
<comment type="subcellular location">
    <subcellularLocation>
        <location evidence="1">Cytoplasm</location>
    </subcellularLocation>
</comment>
<comment type="similarity">
    <text evidence="1">Belongs to the sugar phosphate cyclases superfamily. Dehydroquinate synthase family.</text>
</comment>
<organism>
    <name type="scientific">Synechococcus sp. (strain ATCC 27144 / PCC 6301 / SAUG 1402/1)</name>
    <name type="common">Anacystis nidulans</name>
    <dbReference type="NCBI Taxonomy" id="269084"/>
    <lineage>
        <taxon>Bacteria</taxon>
        <taxon>Bacillati</taxon>
        <taxon>Cyanobacteriota</taxon>
        <taxon>Cyanophyceae</taxon>
        <taxon>Synechococcales</taxon>
        <taxon>Synechococcaceae</taxon>
        <taxon>Synechococcus</taxon>
    </lineage>
</organism>